<feature type="signal peptide">
    <location>
        <begin position="1"/>
        <end position="31"/>
    </location>
</feature>
<feature type="chain" id="PRO_0000024856" description="Pectate lyase D">
    <location>
        <begin position="32"/>
        <end position="391"/>
    </location>
</feature>
<feature type="active site" evidence="2">
    <location>
        <position position="266"/>
    </location>
</feature>
<feature type="binding site" evidence="1">
    <location>
        <position position="170"/>
    </location>
    <ligand>
        <name>Ca(2+)</name>
        <dbReference type="ChEBI" id="CHEBI:29108"/>
    </ligand>
</feature>
<feature type="binding site" evidence="1">
    <location>
        <position position="213"/>
    </location>
    <ligand>
        <name>Ca(2+)</name>
        <dbReference type="ChEBI" id="CHEBI:29108"/>
    </ligand>
</feature>
<gene>
    <name type="primary">pelD</name>
</gene>
<organism>
    <name type="scientific">Dickeya chrysanthemi</name>
    <name type="common">Pectobacterium chrysanthemi</name>
    <name type="synonym">Erwinia chrysanthemi</name>
    <dbReference type="NCBI Taxonomy" id="556"/>
    <lineage>
        <taxon>Bacteria</taxon>
        <taxon>Pseudomonadati</taxon>
        <taxon>Pseudomonadota</taxon>
        <taxon>Gammaproteobacteria</taxon>
        <taxon>Enterobacterales</taxon>
        <taxon>Pectobacteriaceae</taxon>
        <taxon>Dickeya</taxon>
    </lineage>
</organism>
<sequence length="391" mass="42066">MNNTRVSFRSTKSLLAAIIATSMMTWSVNRATLQTTKATEAASTGWATQGGTTGGAKAASAKIYAVKNISEFKAALNGTDTDPKIIQVTGAIDISGGKAYTSFDDQKARSQISVPSNTTIIGIGSNGKFTNGSLVIKGVSNVILRNLYIETPVDVAPHYEEGDGWNAEWDAAVIDNSTRVWVDHVTISDGSFTDDKYTTKNGEKYVQHDGALDIKKGSDYVTISSSRFELHDKTILIGHSDSNGSQDSGKLRVTFHNNVFDRVTERTPRVRFGSIHAYNNVYLGDVKNSVYPYLYSFGLGTSGTILSESNSFTLSNLKSIDGKNPECSIVKQFNSKVFSDNGSLVNGSSTTKLDTCAVTAYKPTLPYKYSAQTMTSSLASSINSNAGYGKL</sequence>
<protein>
    <recommendedName>
        <fullName>Pectate lyase D</fullName>
        <ecNumber>4.2.2.2</ecNumber>
    </recommendedName>
</protein>
<accession>P18209</accession>
<keyword id="KW-0106">Calcium</keyword>
<keyword id="KW-0456">Lyase</keyword>
<keyword id="KW-0479">Metal-binding</keyword>
<keyword id="KW-0964">Secreted</keyword>
<keyword id="KW-0732">Signal</keyword>
<name>PLYD_DICCH</name>
<dbReference type="EC" id="4.2.2.2"/>
<dbReference type="EMBL" id="X17284">
    <property type="protein sequence ID" value="CAA35176.1"/>
    <property type="molecule type" value="Genomic_DNA"/>
</dbReference>
<dbReference type="PIR" id="S06969">
    <property type="entry name" value="S06969"/>
</dbReference>
<dbReference type="SMR" id="P18209"/>
<dbReference type="CAZy" id="PL1">
    <property type="family name" value="Polysaccharide Lyase Family 1"/>
</dbReference>
<dbReference type="BRENDA" id="4.2.2.2">
    <property type="organism ID" value="2141"/>
</dbReference>
<dbReference type="UniPathway" id="UPA00545">
    <property type="reaction ID" value="UER00824"/>
</dbReference>
<dbReference type="GO" id="GO:0005576">
    <property type="term" value="C:extracellular region"/>
    <property type="evidence" value="ECO:0007669"/>
    <property type="project" value="UniProtKB-SubCell"/>
</dbReference>
<dbReference type="GO" id="GO:0046872">
    <property type="term" value="F:metal ion binding"/>
    <property type="evidence" value="ECO:0007669"/>
    <property type="project" value="UniProtKB-KW"/>
</dbReference>
<dbReference type="GO" id="GO:0030570">
    <property type="term" value="F:pectate lyase activity"/>
    <property type="evidence" value="ECO:0007669"/>
    <property type="project" value="UniProtKB-EC"/>
</dbReference>
<dbReference type="GO" id="GO:0045490">
    <property type="term" value="P:pectin catabolic process"/>
    <property type="evidence" value="ECO:0007669"/>
    <property type="project" value="UniProtKB-UniPathway"/>
</dbReference>
<dbReference type="Gene3D" id="2.160.20.10">
    <property type="entry name" value="Single-stranded right-handed beta-helix, Pectin lyase-like"/>
    <property type="match status" value="1"/>
</dbReference>
<dbReference type="InterPro" id="IPR002022">
    <property type="entry name" value="Pec_lyase"/>
</dbReference>
<dbReference type="InterPro" id="IPR012334">
    <property type="entry name" value="Pectin_lyas_fold"/>
</dbReference>
<dbReference type="InterPro" id="IPR011050">
    <property type="entry name" value="Pectin_lyase_fold/virulence"/>
</dbReference>
<dbReference type="InterPro" id="IPR045032">
    <property type="entry name" value="PEL"/>
</dbReference>
<dbReference type="PANTHER" id="PTHR31683">
    <property type="entry name" value="PECTATE LYASE 18-RELATED"/>
    <property type="match status" value="1"/>
</dbReference>
<dbReference type="PANTHER" id="PTHR31683:SF18">
    <property type="entry name" value="PECTATE LYASE 21-RELATED"/>
    <property type="match status" value="1"/>
</dbReference>
<dbReference type="Pfam" id="PF00544">
    <property type="entry name" value="Pectate_lyase_4"/>
    <property type="match status" value="1"/>
</dbReference>
<dbReference type="SMART" id="SM00656">
    <property type="entry name" value="Amb_all"/>
    <property type="match status" value="1"/>
</dbReference>
<dbReference type="SUPFAM" id="SSF51126">
    <property type="entry name" value="Pectin lyase-like"/>
    <property type="match status" value="1"/>
</dbReference>
<evidence type="ECO:0000250" key="1"/>
<evidence type="ECO:0000255" key="2"/>
<evidence type="ECO:0000305" key="3"/>
<reference key="1">
    <citation type="journal article" date="1989" name="Mol. Microbiol.">
        <title>Relationship between the pel genes of the pelADE cluster in Erwinia chrysanthemi strain B374.</title>
        <authorList>
            <person name="van Gijsegem F."/>
        </authorList>
    </citation>
    <scope>NUCLEOTIDE SEQUENCE [GENOMIC DNA]</scope>
    <source>
        <strain>B374</strain>
    </source>
</reference>
<comment type="function">
    <text>Involved in maceration and soft-rotting of plant tissue.</text>
</comment>
<comment type="catalytic activity">
    <reaction>
        <text>Eliminative cleavage of (1-&gt;4)-alpha-D-galacturonan to give oligosaccharides with 4-deoxy-alpha-D-galact-4-enuronosyl groups at their non-reducing ends.</text>
        <dbReference type="EC" id="4.2.2.2"/>
    </reaction>
</comment>
<comment type="cofactor">
    <cofactor evidence="1">
        <name>Ca(2+)</name>
        <dbReference type="ChEBI" id="CHEBI:29108"/>
    </cofactor>
    <text evidence="1">Binds 1 Ca(2+) ion per subunit.</text>
</comment>
<comment type="pathway">
    <text>Glycan metabolism; pectin degradation; 2-dehydro-3-deoxy-D-gluconate from pectin: step 2/5.</text>
</comment>
<comment type="subcellular location">
    <subcellularLocation>
        <location>Secreted</location>
    </subcellularLocation>
</comment>
<comment type="similarity">
    <text evidence="3">Belongs to the polysaccharide lyase 1 family. PLBC subfamily.</text>
</comment>
<proteinExistence type="inferred from homology"/>